<reference key="1">
    <citation type="journal article" date="1992" name="FEMS Microbiol. Lett.">
        <title>Characterization of two genes (hupD and hupE) required for hydrogenase activity in Azotobacter chroococcum.</title>
        <authorList>
            <person name="Du L."/>
            <person name="Stejskal F."/>
            <person name="Tibelius K.H."/>
        </authorList>
    </citation>
    <scope>NUCLEOTIDE SEQUENCE [GENOMIC DNA]</scope>
</reference>
<feature type="chain" id="PRO_0000201456" description="Hydrogenase expression/formation protein HupE">
    <location>
        <begin position="1"/>
        <end position="341"/>
    </location>
</feature>
<accession>P42034</accession>
<protein>
    <recommendedName>
        <fullName>Hydrogenase expression/formation protein HupE</fullName>
    </recommendedName>
</protein>
<gene>
    <name type="primary">hupE</name>
</gene>
<comment type="function">
    <text>May be involved in the maturation of the NifE hydrogenase.</text>
</comment>
<comment type="similarity">
    <text evidence="1">Belongs to the HypE family.</text>
</comment>
<evidence type="ECO:0000305" key="1"/>
<dbReference type="EMBL" id="M92282">
    <property type="protein sequence ID" value="AAA22137.1"/>
    <property type="molecule type" value="Genomic_DNA"/>
</dbReference>
<dbReference type="PIR" id="I39744">
    <property type="entry name" value="I39744"/>
</dbReference>
<dbReference type="SMR" id="P42034"/>
<dbReference type="GO" id="GO:0051604">
    <property type="term" value="P:protein maturation"/>
    <property type="evidence" value="ECO:0007669"/>
    <property type="project" value="TreeGrafter"/>
</dbReference>
<dbReference type="CDD" id="cd02197">
    <property type="entry name" value="HypE"/>
    <property type="match status" value="1"/>
</dbReference>
<dbReference type="Gene3D" id="3.90.650.10">
    <property type="entry name" value="PurM-like C-terminal domain"/>
    <property type="match status" value="1"/>
</dbReference>
<dbReference type="Gene3D" id="3.30.1330.10">
    <property type="entry name" value="PurM-like, N-terminal domain"/>
    <property type="match status" value="1"/>
</dbReference>
<dbReference type="InterPro" id="IPR011854">
    <property type="entry name" value="HypE"/>
</dbReference>
<dbReference type="InterPro" id="IPR010918">
    <property type="entry name" value="PurM-like_C_dom"/>
</dbReference>
<dbReference type="InterPro" id="IPR036676">
    <property type="entry name" value="PurM-like_C_sf"/>
</dbReference>
<dbReference type="InterPro" id="IPR016188">
    <property type="entry name" value="PurM-like_N"/>
</dbReference>
<dbReference type="InterPro" id="IPR036921">
    <property type="entry name" value="PurM-like_N_sf"/>
</dbReference>
<dbReference type="NCBIfam" id="TIGR02124">
    <property type="entry name" value="hypE"/>
    <property type="match status" value="1"/>
</dbReference>
<dbReference type="PANTHER" id="PTHR30303:SF0">
    <property type="entry name" value="CARBAMOYL DEHYDRATASE HYPE"/>
    <property type="match status" value="1"/>
</dbReference>
<dbReference type="PANTHER" id="PTHR30303">
    <property type="entry name" value="HYDROGENASE ISOENZYMES FORMATION PROTEIN HYPE"/>
    <property type="match status" value="1"/>
</dbReference>
<dbReference type="Pfam" id="PF00586">
    <property type="entry name" value="AIRS"/>
    <property type="match status" value="1"/>
</dbReference>
<dbReference type="Pfam" id="PF02769">
    <property type="entry name" value="AIRS_C"/>
    <property type="match status" value="1"/>
</dbReference>
<dbReference type="PIRSF" id="PIRSF005644">
    <property type="entry name" value="Hdrgns_mtr_HypE"/>
    <property type="match status" value="1"/>
</dbReference>
<dbReference type="SUPFAM" id="SSF56042">
    <property type="entry name" value="PurM C-terminal domain-like"/>
    <property type="match status" value="1"/>
</dbReference>
<dbReference type="SUPFAM" id="SSF55326">
    <property type="entry name" value="PurM N-terminal domain-like"/>
    <property type="match status" value="1"/>
</dbReference>
<name>HUPE_AZOCH</name>
<proteinExistence type="inferred from homology"/>
<sequence length="341" mass="36174">MSRLDLKNGSVEMVHGSGGRAMGQLIEELFARALRNQWLDQGNDQAQFELPPGRVVMATDSHVISPLFFPGGDIGSLAVHGTINDVAMAGARPCYLAAGFILEEGFPLADLARIVESMAAAAREAGVPVVTGDTKVVERGKGDGVFITTTGVGVVPPGLYLSGDRARPGDRILLSGSIGDHGVTILSLREGLGFEADIGSDSQALHGLVAAMVEAVPEIRCLRDPTRGGLGNTLNELARQSGVGMQLVERAIPLREPVRAACEFLGLDPLYVANEGKLIAICPAEQAERLLEVMREHPQGREAAIIGTVVADAQCFVQMETLFGGSRMVDWLNGEQLPRMC</sequence>
<organism>
    <name type="scientific">Azotobacter chroococcum mcd 1</name>
    <dbReference type="NCBI Taxonomy" id="355"/>
    <lineage>
        <taxon>Bacteria</taxon>
        <taxon>Pseudomonadati</taxon>
        <taxon>Pseudomonadota</taxon>
        <taxon>Gammaproteobacteria</taxon>
        <taxon>Pseudomonadales</taxon>
        <taxon>Pseudomonadaceae</taxon>
        <taxon>Azotobacter</taxon>
    </lineage>
</organism>